<sequence>MNPVNYLYLAALLFAIGASGVLVRRNAIVVFMCVELMLNACNLALVTFSRMHGNLDGQIVAFFTMVVAAAEVVVGLAIIVSLFRSRHSASVDDASLMKL</sequence>
<accession>B1W509</accession>
<reference key="1">
    <citation type="journal article" date="2008" name="J. Bacteriol.">
        <title>Genome sequence of the streptomycin-producing microorganism Streptomyces griseus IFO 13350.</title>
        <authorList>
            <person name="Ohnishi Y."/>
            <person name="Ishikawa J."/>
            <person name="Hara H."/>
            <person name="Suzuki H."/>
            <person name="Ikenoya M."/>
            <person name="Ikeda H."/>
            <person name="Yamashita A."/>
            <person name="Hattori M."/>
            <person name="Horinouchi S."/>
        </authorList>
    </citation>
    <scope>NUCLEOTIDE SEQUENCE [LARGE SCALE GENOMIC DNA]</scope>
    <source>
        <strain>JCM 4626 / CBS 651.72 / NBRC 13350 / KCC S-0626 / ISP 5235</strain>
    </source>
</reference>
<proteinExistence type="inferred from homology"/>
<name>NUOK1_STRGG</name>
<dbReference type="EC" id="7.1.1.-" evidence="1"/>
<dbReference type="EMBL" id="AP009493">
    <property type="protein sequence ID" value="BAG19803.1"/>
    <property type="molecule type" value="Genomic_DNA"/>
</dbReference>
<dbReference type="SMR" id="B1W509"/>
<dbReference type="KEGG" id="sgr:SGR_2974"/>
<dbReference type="eggNOG" id="COG0713">
    <property type="taxonomic scope" value="Bacteria"/>
</dbReference>
<dbReference type="HOGENOM" id="CLU_144724_0_0_11"/>
<dbReference type="Proteomes" id="UP000001685">
    <property type="component" value="Chromosome"/>
</dbReference>
<dbReference type="GO" id="GO:0030964">
    <property type="term" value="C:NADH dehydrogenase complex"/>
    <property type="evidence" value="ECO:0007669"/>
    <property type="project" value="TreeGrafter"/>
</dbReference>
<dbReference type="GO" id="GO:0005886">
    <property type="term" value="C:plasma membrane"/>
    <property type="evidence" value="ECO:0007669"/>
    <property type="project" value="UniProtKB-SubCell"/>
</dbReference>
<dbReference type="GO" id="GO:0050136">
    <property type="term" value="F:NADH:ubiquinone reductase (non-electrogenic) activity"/>
    <property type="evidence" value="ECO:0007669"/>
    <property type="project" value="UniProtKB-UniRule"/>
</dbReference>
<dbReference type="GO" id="GO:0048038">
    <property type="term" value="F:quinone binding"/>
    <property type="evidence" value="ECO:0007669"/>
    <property type="project" value="UniProtKB-KW"/>
</dbReference>
<dbReference type="GO" id="GO:0042773">
    <property type="term" value="P:ATP synthesis coupled electron transport"/>
    <property type="evidence" value="ECO:0007669"/>
    <property type="project" value="InterPro"/>
</dbReference>
<dbReference type="FunFam" id="1.10.287.3510:FF:000001">
    <property type="entry name" value="NADH-quinone oxidoreductase subunit K"/>
    <property type="match status" value="1"/>
</dbReference>
<dbReference type="Gene3D" id="1.10.287.3510">
    <property type="match status" value="1"/>
</dbReference>
<dbReference type="HAMAP" id="MF_01456">
    <property type="entry name" value="NDH1_NuoK"/>
    <property type="match status" value="1"/>
</dbReference>
<dbReference type="InterPro" id="IPR001133">
    <property type="entry name" value="NADH_UbQ_OxRdtase_chain4L/K"/>
</dbReference>
<dbReference type="InterPro" id="IPR039428">
    <property type="entry name" value="NUOK/Mnh_C1-like"/>
</dbReference>
<dbReference type="NCBIfam" id="NF004320">
    <property type="entry name" value="PRK05715.1-2"/>
    <property type="match status" value="1"/>
</dbReference>
<dbReference type="PANTHER" id="PTHR11434:SF21">
    <property type="entry name" value="NADH DEHYDROGENASE SUBUNIT 4L-RELATED"/>
    <property type="match status" value="1"/>
</dbReference>
<dbReference type="PANTHER" id="PTHR11434">
    <property type="entry name" value="NADH-UBIQUINONE OXIDOREDUCTASE SUBUNIT ND4L"/>
    <property type="match status" value="1"/>
</dbReference>
<dbReference type="Pfam" id="PF00420">
    <property type="entry name" value="Oxidored_q2"/>
    <property type="match status" value="1"/>
</dbReference>
<organism>
    <name type="scientific">Streptomyces griseus subsp. griseus (strain JCM 4626 / CBS 651.72 / NBRC 13350 / KCC S-0626 / ISP 5235)</name>
    <dbReference type="NCBI Taxonomy" id="455632"/>
    <lineage>
        <taxon>Bacteria</taxon>
        <taxon>Bacillati</taxon>
        <taxon>Actinomycetota</taxon>
        <taxon>Actinomycetes</taxon>
        <taxon>Kitasatosporales</taxon>
        <taxon>Streptomycetaceae</taxon>
        <taxon>Streptomyces</taxon>
    </lineage>
</organism>
<evidence type="ECO:0000255" key="1">
    <source>
        <dbReference type="HAMAP-Rule" id="MF_01456"/>
    </source>
</evidence>
<keyword id="KW-1003">Cell membrane</keyword>
<keyword id="KW-0472">Membrane</keyword>
<keyword id="KW-0520">NAD</keyword>
<keyword id="KW-0874">Quinone</keyword>
<keyword id="KW-1278">Translocase</keyword>
<keyword id="KW-0812">Transmembrane</keyword>
<keyword id="KW-1133">Transmembrane helix</keyword>
<keyword id="KW-0813">Transport</keyword>
<comment type="function">
    <text evidence="1">NDH-1 shuttles electrons from NADH, via FMN and iron-sulfur (Fe-S) centers, to quinones in the respiratory chain. The immediate electron acceptor for the enzyme in this species is believed to be a menaquinone. Couples the redox reaction to proton translocation (for every two electrons transferred, four hydrogen ions are translocated across the cytoplasmic membrane), and thus conserves the redox energy in a proton gradient.</text>
</comment>
<comment type="catalytic activity">
    <reaction evidence="1">
        <text>a quinone + NADH + 5 H(+)(in) = a quinol + NAD(+) + 4 H(+)(out)</text>
        <dbReference type="Rhea" id="RHEA:57888"/>
        <dbReference type="ChEBI" id="CHEBI:15378"/>
        <dbReference type="ChEBI" id="CHEBI:24646"/>
        <dbReference type="ChEBI" id="CHEBI:57540"/>
        <dbReference type="ChEBI" id="CHEBI:57945"/>
        <dbReference type="ChEBI" id="CHEBI:132124"/>
    </reaction>
</comment>
<comment type="subunit">
    <text evidence="1">NDH-1 is composed of 14 different subunits. Subunits NuoA, H, J, K, L, M, N constitute the membrane sector of the complex.</text>
</comment>
<comment type="subcellular location">
    <subcellularLocation>
        <location evidence="1">Cell membrane</location>
        <topology evidence="1">Multi-pass membrane protein</topology>
    </subcellularLocation>
</comment>
<comment type="similarity">
    <text evidence="1">Belongs to the complex I subunit 4L family.</text>
</comment>
<gene>
    <name evidence="1" type="primary">nuoK1</name>
    <name type="ordered locus">SGR_2974</name>
</gene>
<protein>
    <recommendedName>
        <fullName evidence="1">NADH-quinone oxidoreductase subunit K 1</fullName>
        <ecNumber evidence="1">7.1.1.-</ecNumber>
    </recommendedName>
    <alternativeName>
        <fullName evidence="1">NADH dehydrogenase I subunit K 1</fullName>
    </alternativeName>
    <alternativeName>
        <fullName evidence="1">NDH-1 subunit K 1</fullName>
    </alternativeName>
</protein>
<feature type="chain" id="PRO_0000390252" description="NADH-quinone oxidoreductase subunit K 1">
    <location>
        <begin position="1"/>
        <end position="99"/>
    </location>
</feature>
<feature type="transmembrane region" description="Helical" evidence="1">
    <location>
        <begin position="3"/>
        <end position="23"/>
    </location>
</feature>
<feature type="transmembrane region" description="Helical" evidence="1">
    <location>
        <begin position="28"/>
        <end position="48"/>
    </location>
</feature>
<feature type="transmembrane region" description="Helical" evidence="1">
    <location>
        <begin position="59"/>
        <end position="79"/>
    </location>
</feature>